<organism>
    <name type="scientific">Caulobacter vibrioides (strain ATCC 19089 / CIP 103742 / CB 15)</name>
    <name type="common">Caulobacter crescentus</name>
    <dbReference type="NCBI Taxonomy" id="190650"/>
    <lineage>
        <taxon>Bacteria</taxon>
        <taxon>Pseudomonadati</taxon>
        <taxon>Pseudomonadota</taxon>
        <taxon>Alphaproteobacteria</taxon>
        <taxon>Caulobacterales</taxon>
        <taxon>Caulobacteraceae</taxon>
        <taxon>Caulobacter</taxon>
    </lineage>
</organism>
<protein>
    <recommendedName>
        <fullName evidence="1">Heat-inducible transcription repressor HrcA</fullName>
    </recommendedName>
</protein>
<keyword id="KW-1185">Reference proteome</keyword>
<keyword id="KW-0678">Repressor</keyword>
<keyword id="KW-0346">Stress response</keyword>
<keyword id="KW-0804">Transcription</keyword>
<keyword id="KW-0805">Transcription regulation</keyword>
<feature type="chain" id="PRO_0000182463" description="Heat-inducible transcription repressor HrcA">
    <location>
        <begin position="1"/>
        <end position="358"/>
    </location>
</feature>
<sequence length="358" mass="38294">MTQLFPGPIVRTPGLAELDARARDIFRRVVESYLETGEPVGSRTISKGGVALSPASIRNTMQDLAQLGLLDAPHTSAGRMPTHAGLRMFVDGFLEVGDVAEQEKRAIEARLAVKGRSFEEALAEASSILSGLAGGAGIVVTPVREGGVKHVEFVPLGGGQVLAVMVFEDGQVENRLMRQAPGVTPSALQEASNFLNARLRGRTLTEARTEMGGELDAARRQLNETAARLVEDGLAAWSGGEGDARSLIVRGQANLLADARAREDIDRVRQLFDDLSRRAQLIGLLDDVRDAEGVRIYIGAETRLFSLSGSSVIAAPYMTGRQKVLGAIGVIGPARLNYARVIPLVDYTARVLGRMMDG</sequence>
<name>HRCA_CAUVC</name>
<comment type="function">
    <text evidence="1">Negative regulator of class I heat shock genes (grpE-dnaK-dnaJ and groELS operons). Prevents heat-shock induction of these operons.</text>
</comment>
<comment type="similarity">
    <text evidence="1">Belongs to the HrcA family.</text>
</comment>
<accession>P0CAV3</accession>
<accession>P54305</accession>
<proteinExistence type="inferred from homology"/>
<reference key="1">
    <citation type="journal article" date="2001" name="Proc. Natl. Acad. Sci. U.S.A.">
        <title>Complete genome sequence of Caulobacter crescentus.</title>
        <authorList>
            <person name="Nierman W.C."/>
            <person name="Feldblyum T.V."/>
            <person name="Laub M.T."/>
            <person name="Paulsen I.T."/>
            <person name="Nelson K.E."/>
            <person name="Eisen J.A."/>
            <person name="Heidelberg J.F."/>
            <person name="Alley M.R.K."/>
            <person name="Ohta N."/>
            <person name="Maddock J.R."/>
            <person name="Potocka I."/>
            <person name="Nelson W.C."/>
            <person name="Newton A."/>
            <person name="Stephens C."/>
            <person name="Phadke N.D."/>
            <person name="Ely B."/>
            <person name="DeBoy R.T."/>
            <person name="Dodson R.J."/>
            <person name="Durkin A.S."/>
            <person name="Gwinn M.L."/>
            <person name="Haft D.H."/>
            <person name="Kolonay J.F."/>
            <person name="Smit J."/>
            <person name="Craven M.B."/>
            <person name="Khouri H.M."/>
            <person name="Shetty J."/>
            <person name="Berry K.J."/>
            <person name="Utterback T.R."/>
            <person name="Tran K."/>
            <person name="Wolf A.M."/>
            <person name="Vamathevan J.J."/>
            <person name="Ermolaeva M.D."/>
            <person name="White O."/>
            <person name="Salzberg S.L."/>
            <person name="Venter J.C."/>
            <person name="Shapiro L."/>
            <person name="Fraser C.M."/>
        </authorList>
    </citation>
    <scope>NUCLEOTIDE SEQUENCE [LARGE SCALE GENOMIC DNA]</scope>
    <source>
        <strain>ATCC 19089 / CIP 103742 / CB 15</strain>
    </source>
</reference>
<dbReference type="EMBL" id="AE005673">
    <property type="protein sequence ID" value="AAK22140.1"/>
    <property type="molecule type" value="Genomic_DNA"/>
</dbReference>
<dbReference type="PIR" id="H87267">
    <property type="entry name" value="H87267"/>
</dbReference>
<dbReference type="RefSeq" id="NP_418972.1">
    <property type="nucleotide sequence ID" value="NC_002696.2"/>
</dbReference>
<dbReference type="RefSeq" id="WP_010918042.1">
    <property type="nucleotide sequence ID" value="NC_002696.2"/>
</dbReference>
<dbReference type="SMR" id="P0CAV3"/>
<dbReference type="STRING" id="190650.CC_0153"/>
<dbReference type="EnsemblBacteria" id="AAK22140">
    <property type="protein sequence ID" value="AAK22140"/>
    <property type="gene ID" value="CC_0153"/>
</dbReference>
<dbReference type="KEGG" id="ccr:CC_0153"/>
<dbReference type="PATRIC" id="fig|190650.5.peg.150"/>
<dbReference type="eggNOG" id="COG1420">
    <property type="taxonomic scope" value="Bacteria"/>
</dbReference>
<dbReference type="HOGENOM" id="CLU_050019_0_0_5"/>
<dbReference type="BioCyc" id="CAULO:CC0153-MONOMER"/>
<dbReference type="Proteomes" id="UP000001816">
    <property type="component" value="Chromosome"/>
</dbReference>
<dbReference type="GO" id="GO:0003677">
    <property type="term" value="F:DNA binding"/>
    <property type="evidence" value="ECO:0007669"/>
    <property type="project" value="InterPro"/>
</dbReference>
<dbReference type="GO" id="GO:0045892">
    <property type="term" value="P:negative regulation of DNA-templated transcription"/>
    <property type="evidence" value="ECO:0007669"/>
    <property type="project" value="UniProtKB-UniRule"/>
</dbReference>
<dbReference type="Gene3D" id="3.30.450.40">
    <property type="match status" value="1"/>
</dbReference>
<dbReference type="Gene3D" id="3.30.390.60">
    <property type="entry name" value="Heat-inducible transcription repressor hrca homolog, domain 3"/>
    <property type="match status" value="1"/>
</dbReference>
<dbReference type="Gene3D" id="1.10.10.10">
    <property type="entry name" value="Winged helix-like DNA-binding domain superfamily/Winged helix DNA-binding domain"/>
    <property type="match status" value="1"/>
</dbReference>
<dbReference type="HAMAP" id="MF_00081">
    <property type="entry name" value="HrcA"/>
    <property type="match status" value="1"/>
</dbReference>
<dbReference type="InterPro" id="IPR029016">
    <property type="entry name" value="GAF-like_dom_sf"/>
</dbReference>
<dbReference type="InterPro" id="IPR002571">
    <property type="entry name" value="HrcA"/>
</dbReference>
<dbReference type="InterPro" id="IPR021153">
    <property type="entry name" value="HrcA_C"/>
</dbReference>
<dbReference type="InterPro" id="IPR036388">
    <property type="entry name" value="WH-like_DNA-bd_sf"/>
</dbReference>
<dbReference type="InterPro" id="IPR036390">
    <property type="entry name" value="WH_DNA-bd_sf"/>
</dbReference>
<dbReference type="InterPro" id="IPR023120">
    <property type="entry name" value="WHTH_transcript_rep_HrcA_IDD"/>
</dbReference>
<dbReference type="NCBIfam" id="TIGR00331">
    <property type="entry name" value="hrcA"/>
    <property type="match status" value="1"/>
</dbReference>
<dbReference type="PANTHER" id="PTHR34824">
    <property type="entry name" value="HEAT-INDUCIBLE TRANSCRIPTION REPRESSOR HRCA"/>
    <property type="match status" value="1"/>
</dbReference>
<dbReference type="PANTHER" id="PTHR34824:SF1">
    <property type="entry name" value="HEAT-INDUCIBLE TRANSCRIPTION REPRESSOR HRCA"/>
    <property type="match status" value="1"/>
</dbReference>
<dbReference type="Pfam" id="PF01628">
    <property type="entry name" value="HrcA"/>
    <property type="match status" value="1"/>
</dbReference>
<dbReference type="PIRSF" id="PIRSF005485">
    <property type="entry name" value="HrcA"/>
    <property type="match status" value="1"/>
</dbReference>
<dbReference type="SUPFAM" id="SSF55781">
    <property type="entry name" value="GAF domain-like"/>
    <property type="match status" value="1"/>
</dbReference>
<dbReference type="SUPFAM" id="SSF46785">
    <property type="entry name" value="Winged helix' DNA-binding domain"/>
    <property type="match status" value="1"/>
</dbReference>
<evidence type="ECO:0000255" key="1">
    <source>
        <dbReference type="HAMAP-Rule" id="MF_00081"/>
    </source>
</evidence>
<gene>
    <name evidence="1" type="primary">hrcA</name>
    <name type="ordered locus">CC_0153</name>
</gene>